<accession>Q97PA3</accession>
<sequence length="208" mass="23686">MADRGLLIVFSGPSGVGKGTVRREIFESSENQFQYSVSMTTRAQRPGEVDGVDYFFRTREEFEELIRQGQMLEYAEYVGNYYGTPLTYVNETLDKGIDVFLEIEVQGALQVKKKVPDAVFIFLTPPDLDELQDRLVGRGTDSAEVIAQRIEKAKEEIALMREYDYAIVNDQVPLAAERVKCVIEAEHFCVDRVIGHYQEMLPKSPTTR</sequence>
<organism>
    <name type="scientific">Streptococcus pneumoniae serotype 4 (strain ATCC BAA-334 / TIGR4)</name>
    <dbReference type="NCBI Taxonomy" id="170187"/>
    <lineage>
        <taxon>Bacteria</taxon>
        <taxon>Bacillati</taxon>
        <taxon>Bacillota</taxon>
        <taxon>Bacilli</taxon>
        <taxon>Lactobacillales</taxon>
        <taxon>Streptococcaceae</taxon>
        <taxon>Streptococcus</taxon>
    </lineage>
</organism>
<evidence type="ECO:0000255" key="1">
    <source>
        <dbReference type="HAMAP-Rule" id="MF_00328"/>
    </source>
</evidence>
<name>KGUA_STRPN</name>
<dbReference type="EC" id="2.7.4.8" evidence="1"/>
<dbReference type="EMBL" id="AE005672">
    <property type="protein sequence ID" value="AAK75814.1"/>
    <property type="molecule type" value="Genomic_DNA"/>
</dbReference>
<dbReference type="PIR" id="E95202">
    <property type="entry name" value="E95202"/>
</dbReference>
<dbReference type="RefSeq" id="WP_000775037.1">
    <property type="nucleotide sequence ID" value="NZ_CP155539.1"/>
</dbReference>
<dbReference type="SMR" id="Q97PA3"/>
<dbReference type="PaxDb" id="170187-SP_1738"/>
<dbReference type="EnsemblBacteria" id="AAK75814">
    <property type="protein sequence ID" value="AAK75814"/>
    <property type="gene ID" value="SP_1738"/>
</dbReference>
<dbReference type="KEGG" id="spn:SP_1738"/>
<dbReference type="eggNOG" id="COG0194">
    <property type="taxonomic scope" value="Bacteria"/>
</dbReference>
<dbReference type="PhylomeDB" id="Q97PA3"/>
<dbReference type="BioCyc" id="SPNE170187:G1FZB-1761-MONOMER"/>
<dbReference type="Proteomes" id="UP000000585">
    <property type="component" value="Chromosome"/>
</dbReference>
<dbReference type="GO" id="GO:0005829">
    <property type="term" value="C:cytosol"/>
    <property type="evidence" value="ECO:0007669"/>
    <property type="project" value="TreeGrafter"/>
</dbReference>
<dbReference type="GO" id="GO:0005524">
    <property type="term" value="F:ATP binding"/>
    <property type="evidence" value="ECO:0007669"/>
    <property type="project" value="UniProtKB-UniRule"/>
</dbReference>
<dbReference type="GO" id="GO:0004385">
    <property type="term" value="F:guanylate kinase activity"/>
    <property type="evidence" value="ECO:0007669"/>
    <property type="project" value="UniProtKB-UniRule"/>
</dbReference>
<dbReference type="CDD" id="cd00071">
    <property type="entry name" value="GMPK"/>
    <property type="match status" value="1"/>
</dbReference>
<dbReference type="FunFam" id="3.40.50.300:FF:000855">
    <property type="entry name" value="Guanylate kinase"/>
    <property type="match status" value="1"/>
</dbReference>
<dbReference type="FunFam" id="3.30.63.10:FF:000002">
    <property type="entry name" value="Guanylate kinase 1"/>
    <property type="match status" value="1"/>
</dbReference>
<dbReference type="Gene3D" id="3.30.63.10">
    <property type="entry name" value="Guanylate Kinase phosphate binding domain"/>
    <property type="match status" value="1"/>
</dbReference>
<dbReference type="Gene3D" id="3.40.50.300">
    <property type="entry name" value="P-loop containing nucleotide triphosphate hydrolases"/>
    <property type="match status" value="1"/>
</dbReference>
<dbReference type="HAMAP" id="MF_00328">
    <property type="entry name" value="Guanylate_kinase"/>
    <property type="match status" value="1"/>
</dbReference>
<dbReference type="InterPro" id="IPR008145">
    <property type="entry name" value="GK/Ca_channel_bsu"/>
</dbReference>
<dbReference type="InterPro" id="IPR008144">
    <property type="entry name" value="Guanylate_kin-like_dom"/>
</dbReference>
<dbReference type="InterPro" id="IPR017665">
    <property type="entry name" value="Guanylate_kinase"/>
</dbReference>
<dbReference type="InterPro" id="IPR020590">
    <property type="entry name" value="Guanylate_kinase_CS"/>
</dbReference>
<dbReference type="InterPro" id="IPR027417">
    <property type="entry name" value="P-loop_NTPase"/>
</dbReference>
<dbReference type="NCBIfam" id="TIGR03263">
    <property type="entry name" value="guanyl_kin"/>
    <property type="match status" value="1"/>
</dbReference>
<dbReference type="PANTHER" id="PTHR23117:SF13">
    <property type="entry name" value="GUANYLATE KINASE"/>
    <property type="match status" value="1"/>
</dbReference>
<dbReference type="PANTHER" id="PTHR23117">
    <property type="entry name" value="GUANYLATE KINASE-RELATED"/>
    <property type="match status" value="1"/>
</dbReference>
<dbReference type="Pfam" id="PF00625">
    <property type="entry name" value="Guanylate_kin"/>
    <property type="match status" value="1"/>
</dbReference>
<dbReference type="SMART" id="SM00072">
    <property type="entry name" value="GuKc"/>
    <property type="match status" value="1"/>
</dbReference>
<dbReference type="SUPFAM" id="SSF52540">
    <property type="entry name" value="P-loop containing nucleoside triphosphate hydrolases"/>
    <property type="match status" value="1"/>
</dbReference>
<dbReference type="PROSITE" id="PS00856">
    <property type="entry name" value="GUANYLATE_KINASE_1"/>
    <property type="match status" value="1"/>
</dbReference>
<dbReference type="PROSITE" id="PS50052">
    <property type="entry name" value="GUANYLATE_KINASE_2"/>
    <property type="match status" value="1"/>
</dbReference>
<protein>
    <recommendedName>
        <fullName evidence="1">Guanylate kinase</fullName>
        <ecNumber evidence="1">2.7.4.8</ecNumber>
    </recommendedName>
    <alternativeName>
        <fullName evidence="1">GMP kinase</fullName>
    </alternativeName>
</protein>
<feature type="chain" id="PRO_0000170618" description="Guanylate kinase">
    <location>
        <begin position="1"/>
        <end position="208"/>
    </location>
</feature>
<feature type="domain" description="Guanylate kinase-like" evidence="1">
    <location>
        <begin position="5"/>
        <end position="184"/>
    </location>
</feature>
<feature type="binding site" evidence="1">
    <location>
        <begin position="12"/>
        <end position="19"/>
    </location>
    <ligand>
        <name>ATP</name>
        <dbReference type="ChEBI" id="CHEBI:30616"/>
    </ligand>
</feature>
<keyword id="KW-0067">ATP-binding</keyword>
<keyword id="KW-0963">Cytoplasm</keyword>
<keyword id="KW-0418">Kinase</keyword>
<keyword id="KW-0547">Nucleotide-binding</keyword>
<keyword id="KW-1185">Reference proteome</keyword>
<keyword id="KW-0808">Transferase</keyword>
<reference key="1">
    <citation type="journal article" date="2001" name="Science">
        <title>Complete genome sequence of a virulent isolate of Streptococcus pneumoniae.</title>
        <authorList>
            <person name="Tettelin H."/>
            <person name="Nelson K.E."/>
            <person name="Paulsen I.T."/>
            <person name="Eisen J.A."/>
            <person name="Read T.D."/>
            <person name="Peterson S.N."/>
            <person name="Heidelberg J.F."/>
            <person name="DeBoy R.T."/>
            <person name="Haft D.H."/>
            <person name="Dodson R.J."/>
            <person name="Durkin A.S."/>
            <person name="Gwinn M.L."/>
            <person name="Kolonay J.F."/>
            <person name="Nelson W.C."/>
            <person name="Peterson J.D."/>
            <person name="Umayam L.A."/>
            <person name="White O."/>
            <person name="Salzberg S.L."/>
            <person name="Lewis M.R."/>
            <person name="Radune D."/>
            <person name="Holtzapple E.K."/>
            <person name="Khouri H.M."/>
            <person name="Wolf A.M."/>
            <person name="Utterback T.R."/>
            <person name="Hansen C.L."/>
            <person name="McDonald L.A."/>
            <person name="Feldblyum T.V."/>
            <person name="Angiuoli S.V."/>
            <person name="Dickinson T."/>
            <person name="Hickey E.K."/>
            <person name="Holt I.E."/>
            <person name="Loftus B.J."/>
            <person name="Yang F."/>
            <person name="Smith H.O."/>
            <person name="Venter J.C."/>
            <person name="Dougherty B.A."/>
            <person name="Morrison D.A."/>
            <person name="Hollingshead S.K."/>
            <person name="Fraser C.M."/>
        </authorList>
    </citation>
    <scope>NUCLEOTIDE SEQUENCE [LARGE SCALE GENOMIC DNA]</scope>
    <source>
        <strain>ATCC BAA-334 / TIGR4</strain>
    </source>
</reference>
<comment type="function">
    <text evidence="1">Essential for recycling GMP and indirectly, cGMP.</text>
</comment>
<comment type="catalytic activity">
    <reaction evidence="1">
        <text>GMP + ATP = GDP + ADP</text>
        <dbReference type="Rhea" id="RHEA:20780"/>
        <dbReference type="ChEBI" id="CHEBI:30616"/>
        <dbReference type="ChEBI" id="CHEBI:58115"/>
        <dbReference type="ChEBI" id="CHEBI:58189"/>
        <dbReference type="ChEBI" id="CHEBI:456216"/>
        <dbReference type="EC" id="2.7.4.8"/>
    </reaction>
</comment>
<comment type="subcellular location">
    <subcellularLocation>
        <location evidence="1">Cytoplasm</location>
    </subcellularLocation>
</comment>
<comment type="similarity">
    <text evidence="1">Belongs to the guanylate kinase family.</text>
</comment>
<proteinExistence type="inferred from homology"/>
<gene>
    <name evidence="1" type="primary">gmk</name>
    <name type="ordered locus">SP_1738</name>
</gene>